<accession>Q1XDQ7</accession>
<dbReference type="EC" id="2.2.1.6"/>
<dbReference type="EMBL" id="AP006715">
    <property type="protein sequence ID" value="BAE92354.1"/>
    <property type="molecule type" value="Genomic_DNA"/>
</dbReference>
<dbReference type="RefSeq" id="YP_536911.1">
    <property type="nucleotide sequence ID" value="NC_007932.1"/>
</dbReference>
<dbReference type="SMR" id="Q1XDQ7"/>
<dbReference type="GeneID" id="3978890"/>
<dbReference type="UniPathway" id="UPA00047">
    <property type="reaction ID" value="UER00055"/>
</dbReference>
<dbReference type="UniPathway" id="UPA00049">
    <property type="reaction ID" value="UER00059"/>
</dbReference>
<dbReference type="GO" id="GO:0009507">
    <property type="term" value="C:chloroplast"/>
    <property type="evidence" value="ECO:0007669"/>
    <property type="project" value="UniProtKB-SubCell"/>
</dbReference>
<dbReference type="GO" id="GO:0005829">
    <property type="term" value="C:cytosol"/>
    <property type="evidence" value="ECO:0007669"/>
    <property type="project" value="TreeGrafter"/>
</dbReference>
<dbReference type="GO" id="GO:0003984">
    <property type="term" value="F:acetolactate synthase activity"/>
    <property type="evidence" value="ECO:0007669"/>
    <property type="project" value="UniProtKB-EC"/>
</dbReference>
<dbReference type="GO" id="GO:1990610">
    <property type="term" value="F:acetolactate synthase regulator activity"/>
    <property type="evidence" value="ECO:0007669"/>
    <property type="project" value="InterPro"/>
</dbReference>
<dbReference type="GO" id="GO:0009097">
    <property type="term" value="P:isoleucine biosynthetic process"/>
    <property type="evidence" value="ECO:0007669"/>
    <property type="project" value="UniProtKB-UniPathway"/>
</dbReference>
<dbReference type="GO" id="GO:0009099">
    <property type="term" value="P:L-valine biosynthetic process"/>
    <property type="evidence" value="ECO:0007669"/>
    <property type="project" value="UniProtKB-UniPathway"/>
</dbReference>
<dbReference type="CDD" id="cd04878">
    <property type="entry name" value="ACT_AHAS"/>
    <property type="match status" value="1"/>
</dbReference>
<dbReference type="FunFam" id="3.30.70.1150:FF:000001">
    <property type="entry name" value="Acetolactate synthase small subunit"/>
    <property type="match status" value="1"/>
</dbReference>
<dbReference type="FunFam" id="3.30.70.260:FF:000001">
    <property type="entry name" value="Acetolactate synthase, small subunit"/>
    <property type="match status" value="1"/>
</dbReference>
<dbReference type="Gene3D" id="3.30.70.260">
    <property type="match status" value="1"/>
</dbReference>
<dbReference type="Gene3D" id="3.30.70.1150">
    <property type="entry name" value="ACT-like. Chain A, domain 2"/>
    <property type="match status" value="1"/>
</dbReference>
<dbReference type="InterPro" id="IPR004789">
    <property type="entry name" value="Acetalactate_synth_ssu"/>
</dbReference>
<dbReference type="InterPro" id="IPR027271">
    <property type="entry name" value="Acetolactate_synth/TF_NikR_C"/>
</dbReference>
<dbReference type="InterPro" id="IPR019455">
    <property type="entry name" value="Acetolactate_synth_ssu_C"/>
</dbReference>
<dbReference type="InterPro" id="IPR045865">
    <property type="entry name" value="ACT-like_dom_sf"/>
</dbReference>
<dbReference type="InterPro" id="IPR002912">
    <property type="entry name" value="ACT_dom"/>
</dbReference>
<dbReference type="InterPro" id="IPR039557">
    <property type="entry name" value="AHAS_ACT"/>
</dbReference>
<dbReference type="InterPro" id="IPR054480">
    <property type="entry name" value="AHAS_small-like_ACT"/>
</dbReference>
<dbReference type="NCBIfam" id="TIGR00119">
    <property type="entry name" value="acolac_sm"/>
    <property type="match status" value="1"/>
</dbReference>
<dbReference type="NCBIfam" id="NF008864">
    <property type="entry name" value="PRK11895.1"/>
    <property type="match status" value="1"/>
</dbReference>
<dbReference type="PANTHER" id="PTHR30239">
    <property type="entry name" value="ACETOLACTATE SYNTHASE SMALL SUBUNIT"/>
    <property type="match status" value="1"/>
</dbReference>
<dbReference type="PANTHER" id="PTHR30239:SF0">
    <property type="entry name" value="ACETOLACTATE SYNTHASE SMALL SUBUNIT 1, CHLOROPLASTIC"/>
    <property type="match status" value="1"/>
</dbReference>
<dbReference type="Pfam" id="PF22629">
    <property type="entry name" value="ACT_AHAS_ss"/>
    <property type="match status" value="1"/>
</dbReference>
<dbReference type="Pfam" id="PF10369">
    <property type="entry name" value="ALS_ss_C"/>
    <property type="match status" value="1"/>
</dbReference>
<dbReference type="SUPFAM" id="SSF55021">
    <property type="entry name" value="ACT-like"/>
    <property type="match status" value="2"/>
</dbReference>
<dbReference type="PROSITE" id="PS51671">
    <property type="entry name" value="ACT"/>
    <property type="match status" value="1"/>
</dbReference>
<organism>
    <name type="scientific">Pyropia yezoensis</name>
    <name type="common">Susabi-nori</name>
    <name type="synonym">Porphyra yezoensis</name>
    <dbReference type="NCBI Taxonomy" id="2788"/>
    <lineage>
        <taxon>Eukaryota</taxon>
        <taxon>Rhodophyta</taxon>
        <taxon>Bangiophyceae</taxon>
        <taxon>Bangiales</taxon>
        <taxon>Bangiaceae</taxon>
        <taxon>Pyropia</taxon>
    </lineage>
</organism>
<geneLocation type="chloroplast"/>
<sequence length="174" mass="19338">MKHTLSVLVQDEAGVLSRISGLFARRGFNIASLAVGPAEQIGVSRITMVVQGDNRTIEQLTKQLYKLVNILNVQDVTNIPSVERELMLIKIQINSQTRTEALEIVRIFRAKIVDIAEDLLIIEVTGDPGKIVAIEQLLTKFGIIEIARTGKILLVRTSKINTEYLKNRVVAYGT</sequence>
<gene>
    <name type="primary">ilvH</name>
</gene>
<proteinExistence type="inferred from homology"/>
<reference key="1">
    <citation type="submission" date="2003-11" db="EMBL/GenBank/DDBJ databases">
        <title>Whole genome sequence of Porphyra yezoensis chloroplast.</title>
        <authorList>
            <person name="Kunimoto M."/>
            <person name="Morishima K."/>
            <person name="Yoshikawa M."/>
            <person name="Fukuda S."/>
            <person name="Kobayashi T."/>
            <person name="Kobayashi M."/>
            <person name="Okazaki T."/>
            <person name="Ohara I."/>
            <person name="Nakayama I."/>
        </authorList>
    </citation>
    <scope>NUCLEOTIDE SEQUENCE [LARGE SCALE GENOMIC DNA]</scope>
    <source>
        <strain>U-51</strain>
    </source>
</reference>
<evidence type="ECO:0000250" key="1"/>
<evidence type="ECO:0000255" key="2">
    <source>
        <dbReference type="PROSITE-ProRule" id="PRU01007"/>
    </source>
</evidence>
<evidence type="ECO:0000305" key="3"/>
<protein>
    <recommendedName>
        <fullName>Acetolactate synthase small subunit</fullName>
        <ecNumber>2.2.1.6</ecNumber>
    </recommendedName>
    <alternativeName>
        <fullName>Acetohydroxy-acid synthase small subunit</fullName>
        <shortName>AHAS</shortName>
        <shortName>ALS</shortName>
    </alternativeName>
</protein>
<feature type="chain" id="PRO_0000277459" description="Acetolactate synthase small subunit">
    <location>
        <begin position="1"/>
        <end position="174"/>
    </location>
</feature>
<feature type="domain" description="ACT" evidence="2">
    <location>
        <begin position="4"/>
        <end position="78"/>
    </location>
</feature>
<comment type="catalytic activity">
    <reaction>
        <text>2 pyruvate + H(+) = (2S)-2-acetolactate + CO2</text>
        <dbReference type="Rhea" id="RHEA:25249"/>
        <dbReference type="ChEBI" id="CHEBI:15361"/>
        <dbReference type="ChEBI" id="CHEBI:15378"/>
        <dbReference type="ChEBI" id="CHEBI:16526"/>
        <dbReference type="ChEBI" id="CHEBI:58476"/>
        <dbReference type="EC" id="2.2.1.6"/>
    </reaction>
</comment>
<comment type="pathway">
    <text>Amino-acid biosynthesis; L-isoleucine biosynthesis; L-isoleucine from 2-oxobutanoate: step 1/4.</text>
</comment>
<comment type="pathway">
    <text>Amino-acid biosynthesis; L-valine biosynthesis; L-valine from pyruvate: step 1/4.</text>
</comment>
<comment type="subunit">
    <text evidence="1">Dimer of large and small chains.</text>
</comment>
<comment type="subcellular location">
    <subcellularLocation>
        <location>Plastid</location>
        <location>Chloroplast</location>
    </subcellularLocation>
</comment>
<comment type="similarity">
    <text evidence="3">Belongs to the acetolactate synthase small subunit family.</text>
</comment>
<keyword id="KW-0028">Amino-acid biosynthesis</keyword>
<keyword id="KW-0100">Branched-chain amino acid biosynthesis</keyword>
<keyword id="KW-0150">Chloroplast</keyword>
<keyword id="KW-0934">Plastid</keyword>
<keyword id="KW-0808">Transferase</keyword>
<name>ILVH_PYRYE</name>